<accession>Q817W4</accession>
<sequence length="336" mass="37206">MSIIVERLLSRESAYGDAVEDFPLRPQTLRQYIGQNKAKHNLEVFIEAAKMREETLDHVLLYGPPGLGKTTLANIIANEMGVNVKTTSGPAIGRPGDLAAVLTALQPGDVLFIDEIHRLHRSIEEVLYPAMEDFCLDIVIGKGPSARSVRLDLPPFTLVGATTRAGALSAPLRDRFGVLSRVEYYTVDQLSAIVERTAEVFEVEIDSLAALEIARRARGTPRIANRLLRRVRDFAQVRGNGTVTMEITQMALELLQVDKLGLDHIDHKLLLGIIEKFRGGPVGLETVSAPIGEESHTIEDVYEPYLLQIGFLQRTPRGRIVTPLAYEHFGMEIPKV</sequence>
<keyword id="KW-0067">ATP-binding</keyword>
<keyword id="KW-0963">Cytoplasm</keyword>
<keyword id="KW-0227">DNA damage</keyword>
<keyword id="KW-0233">DNA recombination</keyword>
<keyword id="KW-0234">DNA repair</keyword>
<keyword id="KW-0238">DNA-binding</keyword>
<keyword id="KW-0378">Hydrolase</keyword>
<keyword id="KW-0547">Nucleotide-binding</keyword>
<keyword id="KW-1185">Reference proteome</keyword>
<evidence type="ECO:0000255" key="1">
    <source>
        <dbReference type="HAMAP-Rule" id="MF_00016"/>
    </source>
</evidence>
<evidence type="ECO:0000305" key="2"/>
<dbReference type="EC" id="3.6.4.-" evidence="1"/>
<dbReference type="EMBL" id="AE016877">
    <property type="protein sequence ID" value="AAP11327.1"/>
    <property type="status" value="ALT_SEQ"/>
    <property type="molecule type" value="Genomic_DNA"/>
</dbReference>
<dbReference type="RefSeq" id="NP_834126.1">
    <property type="nucleotide sequence ID" value="NC_004722.1"/>
</dbReference>
<dbReference type="SMR" id="Q817W4"/>
<dbReference type="STRING" id="226900.BC_4414"/>
<dbReference type="KEGG" id="bce:BC4414"/>
<dbReference type="PATRIC" id="fig|226900.8.peg.4565"/>
<dbReference type="HOGENOM" id="CLU_055599_1_0_9"/>
<dbReference type="Proteomes" id="UP000001417">
    <property type="component" value="Chromosome"/>
</dbReference>
<dbReference type="GO" id="GO:0005737">
    <property type="term" value="C:cytoplasm"/>
    <property type="evidence" value="ECO:0007669"/>
    <property type="project" value="UniProtKB-SubCell"/>
</dbReference>
<dbReference type="GO" id="GO:0048476">
    <property type="term" value="C:Holliday junction resolvase complex"/>
    <property type="evidence" value="ECO:0007669"/>
    <property type="project" value="UniProtKB-UniRule"/>
</dbReference>
<dbReference type="GO" id="GO:0005524">
    <property type="term" value="F:ATP binding"/>
    <property type="evidence" value="ECO:0007669"/>
    <property type="project" value="UniProtKB-UniRule"/>
</dbReference>
<dbReference type="GO" id="GO:0016887">
    <property type="term" value="F:ATP hydrolysis activity"/>
    <property type="evidence" value="ECO:0007669"/>
    <property type="project" value="InterPro"/>
</dbReference>
<dbReference type="GO" id="GO:0000400">
    <property type="term" value="F:four-way junction DNA binding"/>
    <property type="evidence" value="ECO:0007669"/>
    <property type="project" value="UniProtKB-UniRule"/>
</dbReference>
<dbReference type="GO" id="GO:0009378">
    <property type="term" value="F:four-way junction helicase activity"/>
    <property type="evidence" value="ECO:0007669"/>
    <property type="project" value="InterPro"/>
</dbReference>
<dbReference type="GO" id="GO:0006310">
    <property type="term" value="P:DNA recombination"/>
    <property type="evidence" value="ECO:0007669"/>
    <property type="project" value="UniProtKB-UniRule"/>
</dbReference>
<dbReference type="GO" id="GO:0006281">
    <property type="term" value="P:DNA repair"/>
    <property type="evidence" value="ECO:0007669"/>
    <property type="project" value="UniProtKB-UniRule"/>
</dbReference>
<dbReference type="CDD" id="cd00009">
    <property type="entry name" value="AAA"/>
    <property type="match status" value="1"/>
</dbReference>
<dbReference type="Gene3D" id="1.10.8.60">
    <property type="match status" value="1"/>
</dbReference>
<dbReference type="Gene3D" id="3.40.50.300">
    <property type="entry name" value="P-loop containing nucleotide triphosphate hydrolases"/>
    <property type="match status" value="1"/>
</dbReference>
<dbReference type="Gene3D" id="1.10.10.10">
    <property type="entry name" value="Winged helix-like DNA-binding domain superfamily/Winged helix DNA-binding domain"/>
    <property type="match status" value="1"/>
</dbReference>
<dbReference type="HAMAP" id="MF_00016">
    <property type="entry name" value="DNA_HJ_migration_RuvB"/>
    <property type="match status" value="1"/>
</dbReference>
<dbReference type="InterPro" id="IPR003593">
    <property type="entry name" value="AAA+_ATPase"/>
</dbReference>
<dbReference type="InterPro" id="IPR041445">
    <property type="entry name" value="AAA_lid_4"/>
</dbReference>
<dbReference type="InterPro" id="IPR004605">
    <property type="entry name" value="DNA_helicase_Holl-junc_RuvB"/>
</dbReference>
<dbReference type="InterPro" id="IPR027417">
    <property type="entry name" value="P-loop_NTPase"/>
</dbReference>
<dbReference type="InterPro" id="IPR008824">
    <property type="entry name" value="RuvB-like_N"/>
</dbReference>
<dbReference type="InterPro" id="IPR008823">
    <property type="entry name" value="RuvB_C"/>
</dbReference>
<dbReference type="InterPro" id="IPR036388">
    <property type="entry name" value="WH-like_DNA-bd_sf"/>
</dbReference>
<dbReference type="InterPro" id="IPR036390">
    <property type="entry name" value="WH_DNA-bd_sf"/>
</dbReference>
<dbReference type="NCBIfam" id="NF000868">
    <property type="entry name" value="PRK00080.1"/>
    <property type="match status" value="1"/>
</dbReference>
<dbReference type="NCBIfam" id="TIGR00635">
    <property type="entry name" value="ruvB"/>
    <property type="match status" value="1"/>
</dbReference>
<dbReference type="PANTHER" id="PTHR42848">
    <property type="match status" value="1"/>
</dbReference>
<dbReference type="PANTHER" id="PTHR42848:SF1">
    <property type="entry name" value="HOLLIDAY JUNCTION BRANCH MIGRATION COMPLEX SUBUNIT RUVB"/>
    <property type="match status" value="1"/>
</dbReference>
<dbReference type="Pfam" id="PF17864">
    <property type="entry name" value="AAA_lid_4"/>
    <property type="match status" value="1"/>
</dbReference>
<dbReference type="Pfam" id="PF05491">
    <property type="entry name" value="RuvB_C"/>
    <property type="match status" value="1"/>
</dbReference>
<dbReference type="Pfam" id="PF05496">
    <property type="entry name" value="RuvB_N"/>
    <property type="match status" value="1"/>
</dbReference>
<dbReference type="SMART" id="SM00382">
    <property type="entry name" value="AAA"/>
    <property type="match status" value="1"/>
</dbReference>
<dbReference type="SUPFAM" id="SSF52540">
    <property type="entry name" value="P-loop containing nucleoside triphosphate hydrolases"/>
    <property type="match status" value="1"/>
</dbReference>
<dbReference type="SUPFAM" id="SSF46785">
    <property type="entry name" value="Winged helix' DNA-binding domain"/>
    <property type="match status" value="1"/>
</dbReference>
<protein>
    <recommendedName>
        <fullName evidence="1">Holliday junction branch migration complex subunit RuvB</fullName>
        <ecNumber evidence="1">3.6.4.-</ecNumber>
    </recommendedName>
</protein>
<reference key="1">
    <citation type="journal article" date="2003" name="Nature">
        <title>Genome sequence of Bacillus cereus and comparative analysis with Bacillus anthracis.</title>
        <authorList>
            <person name="Ivanova N."/>
            <person name="Sorokin A."/>
            <person name="Anderson I."/>
            <person name="Galleron N."/>
            <person name="Candelon B."/>
            <person name="Kapatral V."/>
            <person name="Bhattacharyya A."/>
            <person name="Reznik G."/>
            <person name="Mikhailova N."/>
            <person name="Lapidus A."/>
            <person name="Chu L."/>
            <person name="Mazur M."/>
            <person name="Goltsman E."/>
            <person name="Larsen N."/>
            <person name="D'Souza M."/>
            <person name="Walunas T."/>
            <person name="Grechkin Y."/>
            <person name="Pusch G."/>
            <person name="Haselkorn R."/>
            <person name="Fonstein M."/>
            <person name="Ehrlich S.D."/>
            <person name="Overbeek R."/>
            <person name="Kyrpides N.C."/>
        </authorList>
    </citation>
    <scope>NUCLEOTIDE SEQUENCE [LARGE SCALE GENOMIC DNA]</scope>
    <source>
        <strain>ATCC 14579 / DSM 31 / CCUG 7414 / JCM 2152 / NBRC 15305 / NCIMB 9373 / NCTC 2599 / NRRL B-3711</strain>
    </source>
</reference>
<organism>
    <name type="scientific">Bacillus cereus (strain ATCC 14579 / DSM 31 / CCUG 7414 / JCM 2152 / NBRC 15305 / NCIMB 9373 / NCTC 2599 / NRRL B-3711)</name>
    <dbReference type="NCBI Taxonomy" id="226900"/>
    <lineage>
        <taxon>Bacteria</taxon>
        <taxon>Bacillati</taxon>
        <taxon>Bacillota</taxon>
        <taxon>Bacilli</taxon>
        <taxon>Bacillales</taxon>
        <taxon>Bacillaceae</taxon>
        <taxon>Bacillus</taxon>
        <taxon>Bacillus cereus group</taxon>
    </lineage>
</organism>
<name>RUVB_BACCR</name>
<proteinExistence type="inferred from homology"/>
<comment type="function">
    <text evidence="1">The RuvA-RuvB-RuvC complex processes Holliday junction (HJ) DNA during genetic recombination and DNA repair, while the RuvA-RuvB complex plays an important role in the rescue of blocked DNA replication forks via replication fork reversal (RFR). RuvA specifically binds to HJ cruciform DNA, conferring on it an open structure. The RuvB hexamer acts as an ATP-dependent pump, pulling dsDNA into and through the RuvAB complex. RuvB forms 2 homohexamers on either side of HJ DNA bound by 1 or 2 RuvA tetramers; 4 subunits per hexamer contact DNA at a time. Coordinated motions by a converter formed by DNA-disengaged RuvB subunits stimulates ATP hydrolysis and nucleotide exchange. Immobilization of the converter enables RuvB to convert the ATP-contained energy into a lever motion, pulling 2 nucleotides of DNA out of the RuvA tetramer per ATP hydrolyzed, thus driving DNA branch migration. The RuvB motors rotate together with the DNA substrate, which together with the progressing nucleotide cycle form the mechanistic basis for DNA recombination by continuous HJ branch migration. Branch migration allows RuvC to scan DNA until it finds its consensus sequence, where it cleaves and resolves cruciform DNA.</text>
</comment>
<comment type="catalytic activity">
    <reaction evidence="1">
        <text>ATP + H2O = ADP + phosphate + H(+)</text>
        <dbReference type="Rhea" id="RHEA:13065"/>
        <dbReference type="ChEBI" id="CHEBI:15377"/>
        <dbReference type="ChEBI" id="CHEBI:15378"/>
        <dbReference type="ChEBI" id="CHEBI:30616"/>
        <dbReference type="ChEBI" id="CHEBI:43474"/>
        <dbReference type="ChEBI" id="CHEBI:456216"/>
    </reaction>
</comment>
<comment type="subunit">
    <text evidence="1">Homohexamer. Forms an RuvA(8)-RuvB(12)-Holliday junction (HJ) complex. HJ DNA is sandwiched between 2 RuvA tetramers; dsDNA enters through RuvA and exits via RuvB. An RuvB hexamer assembles on each DNA strand where it exits the tetramer. Each RuvB hexamer is contacted by two RuvA subunits (via domain III) on 2 adjacent RuvB subunits; this complex drives branch migration. In the full resolvosome a probable DNA-RuvA(4)-RuvB(12)-RuvC(2) complex forms which resolves the HJ.</text>
</comment>
<comment type="subcellular location">
    <subcellularLocation>
        <location evidence="1">Cytoplasm</location>
    </subcellularLocation>
</comment>
<comment type="domain">
    <text evidence="1">Has 3 domains, the large (RuvB-L) and small ATPase (RuvB-S) domains and the C-terminal head (RuvB-H) domain. The head domain binds DNA, while the ATPase domains jointly bind ATP, ADP or are empty depending on the state of the subunit in the translocation cycle. During a single DNA translocation step the structure of each domain remains the same, but their relative positions change.</text>
</comment>
<comment type="similarity">
    <text evidence="1">Belongs to the RuvB family.</text>
</comment>
<comment type="sequence caution" evidence="2">
    <conflict type="erroneous termination">
        <sequence resource="EMBL-CDS" id="AAP11327"/>
    </conflict>
    <text>Truncated C-terminus.</text>
</comment>
<gene>
    <name evidence="1" type="primary">ruvB</name>
    <name type="ordered locus">BC_4414</name>
</gene>
<feature type="chain" id="PRO_0000165486" description="Holliday junction branch migration complex subunit RuvB">
    <location>
        <begin position="1"/>
        <end position="336"/>
    </location>
</feature>
<feature type="region of interest" description="Large ATPase domain (RuvB-L)" evidence="1">
    <location>
        <begin position="1"/>
        <end position="185"/>
    </location>
</feature>
<feature type="region of interest" description="Small ATPAse domain (RuvB-S)" evidence="1">
    <location>
        <begin position="186"/>
        <end position="256"/>
    </location>
</feature>
<feature type="region of interest" description="Head domain (RuvB-H)" evidence="1">
    <location>
        <begin position="259"/>
        <end position="336"/>
    </location>
</feature>
<feature type="binding site" evidence="1">
    <location>
        <position position="24"/>
    </location>
    <ligand>
        <name>ATP</name>
        <dbReference type="ChEBI" id="CHEBI:30616"/>
    </ligand>
</feature>
<feature type="binding site" evidence="1">
    <location>
        <position position="25"/>
    </location>
    <ligand>
        <name>ATP</name>
        <dbReference type="ChEBI" id="CHEBI:30616"/>
    </ligand>
</feature>
<feature type="binding site" evidence="1">
    <location>
        <position position="66"/>
    </location>
    <ligand>
        <name>ATP</name>
        <dbReference type="ChEBI" id="CHEBI:30616"/>
    </ligand>
</feature>
<feature type="binding site" evidence="1">
    <location>
        <position position="69"/>
    </location>
    <ligand>
        <name>ATP</name>
        <dbReference type="ChEBI" id="CHEBI:30616"/>
    </ligand>
</feature>
<feature type="binding site" evidence="1">
    <location>
        <position position="70"/>
    </location>
    <ligand>
        <name>ATP</name>
        <dbReference type="ChEBI" id="CHEBI:30616"/>
    </ligand>
</feature>
<feature type="binding site" evidence="1">
    <location>
        <position position="70"/>
    </location>
    <ligand>
        <name>Mg(2+)</name>
        <dbReference type="ChEBI" id="CHEBI:18420"/>
    </ligand>
</feature>
<feature type="binding site" evidence="1">
    <location>
        <position position="71"/>
    </location>
    <ligand>
        <name>ATP</name>
        <dbReference type="ChEBI" id="CHEBI:30616"/>
    </ligand>
</feature>
<feature type="binding site" evidence="1">
    <location>
        <begin position="132"/>
        <end position="134"/>
    </location>
    <ligand>
        <name>ATP</name>
        <dbReference type="ChEBI" id="CHEBI:30616"/>
    </ligand>
</feature>
<feature type="binding site" evidence="1">
    <location>
        <position position="175"/>
    </location>
    <ligand>
        <name>ATP</name>
        <dbReference type="ChEBI" id="CHEBI:30616"/>
    </ligand>
</feature>
<feature type="binding site" evidence="1">
    <location>
        <position position="185"/>
    </location>
    <ligand>
        <name>ATP</name>
        <dbReference type="ChEBI" id="CHEBI:30616"/>
    </ligand>
</feature>
<feature type="binding site" evidence="1">
    <location>
        <position position="222"/>
    </location>
    <ligand>
        <name>ATP</name>
        <dbReference type="ChEBI" id="CHEBI:30616"/>
    </ligand>
</feature>
<feature type="binding site" evidence="1">
    <location>
        <position position="314"/>
    </location>
    <ligand>
        <name>DNA</name>
        <dbReference type="ChEBI" id="CHEBI:16991"/>
    </ligand>
</feature>
<feature type="binding site" evidence="1">
    <location>
        <position position="319"/>
    </location>
    <ligand>
        <name>DNA</name>
        <dbReference type="ChEBI" id="CHEBI:16991"/>
    </ligand>
</feature>